<feature type="chain" id="PRO_0000388615" description="Golgi to ER traffic protein 1">
    <location>
        <begin position="1"/>
        <end position="235"/>
    </location>
</feature>
<feature type="topological domain" description="Lumenal" evidence="1">
    <location>
        <position position="1"/>
    </location>
</feature>
<feature type="transmembrane region" description="Helical" evidence="1">
    <location>
        <begin position="2"/>
        <end position="21"/>
    </location>
</feature>
<feature type="topological domain" description="Cytoplasmic" evidence="1">
    <location>
        <begin position="22"/>
        <end position="104"/>
    </location>
</feature>
<feature type="transmembrane region" description="Helical" evidence="1">
    <location>
        <begin position="105"/>
        <end position="125"/>
    </location>
</feature>
<feature type="topological domain" description="Lumenal" evidence="1">
    <location>
        <begin position="126"/>
        <end position="181"/>
    </location>
</feature>
<feature type="transmembrane region" description="Helical" evidence="1">
    <location>
        <begin position="182"/>
        <end position="198"/>
    </location>
</feature>
<feature type="topological domain" description="Cytoplasmic" evidence="1">
    <location>
        <begin position="199"/>
        <end position="235"/>
    </location>
</feature>
<feature type="coiled-coil region" evidence="1">
    <location>
        <begin position="68"/>
        <end position="104"/>
    </location>
</feature>
<reference key="1">
    <citation type="submission" date="2005-03" db="EMBL/GenBank/DDBJ databases">
        <title>Annotation of the Saccharomyces cerevisiae RM11-1a genome.</title>
        <authorList>
            <consortium name="The Broad Institute Genome Sequencing Platform"/>
            <person name="Birren B.W."/>
            <person name="Lander E.S."/>
            <person name="Galagan J.E."/>
            <person name="Nusbaum C."/>
            <person name="Devon K."/>
            <person name="Cuomo C."/>
            <person name="Jaffe D.B."/>
            <person name="Butler J."/>
            <person name="Alvarez P."/>
            <person name="Gnerre S."/>
            <person name="Grabherr M."/>
            <person name="Kleber M."/>
            <person name="Mauceli E.W."/>
            <person name="Brockman W."/>
            <person name="MacCallum I.A."/>
            <person name="Rounsley S."/>
            <person name="Young S.K."/>
            <person name="LaButti K."/>
            <person name="Pushparaj V."/>
            <person name="DeCaprio D."/>
            <person name="Crawford M."/>
            <person name="Koehrsen M."/>
            <person name="Engels R."/>
            <person name="Montgomery P."/>
            <person name="Pearson M."/>
            <person name="Howarth C."/>
            <person name="Larson L."/>
            <person name="Luoma S."/>
            <person name="White J."/>
            <person name="O'Leary S."/>
            <person name="Kodira C.D."/>
            <person name="Zeng Q."/>
            <person name="Yandava C."/>
            <person name="Alvarado L."/>
            <person name="Pratt S."/>
            <person name="Kruglyak L."/>
        </authorList>
    </citation>
    <scope>NUCLEOTIDE SEQUENCE [LARGE SCALE GENOMIC DNA]</scope>
    <source>
        <strain>RM11-1a</strain>
    </source>
</reference>
<evidence type="ECO:0000255" key="1">
    <source>
        <dbReference type="HAMAP-Rule" id="MF_03113"/>
    </source>
</evidence>
<sequence length="235" mass="27092">MHWAAAVAIFFIVVTKFLQYTNKYHEKWISKFAPGNELSKKYLAKVKERHELKEFNNSISAQDNYAKWTKNNRKLDSLDKEINNLKDEIQSENKAFQAHLHKLRLLALTVPFFVFKIMYGKTPVYKLSSSTSTLFPTFVSGVWSQGWLYVLLHPLRTISQKWHIMEGKFGASKFDDMALQSVSLGIWVWALMNVINGVEFIVKQLFLTPKMEAPASVETQEEKALDAVDDAIILD</sequence>
<protein>
    <recommendedName>
        <fullName evidence="1">Golgi to ER traffic protein 1</fullName>
    </recommendedName>
    <alternativeName>
        <fullName evidence="1">Guided entry of tail-anchored proteins 1</fullName>
    </alternativeName>
</protein>
<comment type="function">
    <text evidence="1">Required for the post-translational delivery of tail-anchored (TA) proteins to the endoplasmic reticulum. Together with GET2, acts as a membrane receptor for soluble GET3, which recognizes and selectively binds the transmembrane domain of TA proteins in the cytosol. The GET complex cooperates with the HDEL receptor ERD2 to mediate the ATP-dependent retrieval of resident ER proteins that contain a C-terminal H-D-E-L retention signal from the Golgi to the ER.</text>
</comment>
<comment type="subunit">
    <text evidence="1">Component of the Golgi to ER traffic (GET) complex, which is composed of GET1, GET2 and GET3. Within the complex, GET1 and GET2 form a heterotetramer which is stabilized by phosphatidylinositol binding and which binds to the GET3 homodimer.</text>
</comment>
<comment type="subcellular location">
    <subcellularLocation>
        <location evidence="1">Endoplasmic reticulum membrane</location>
        <topology evidence="1">Multi-pass membrane protein</topology>
    </subcellularLocation>
    <subcellularLocation>
        <location evidence="1">Golgi apparatus membrane</location>
        <topology evidence="1">Multi-pass membrane protein</topology>
    </subcellularLocation>
</comment>
<comment type="similarity">
    <text evidence="1">Belongs to the WRB/GET1 family.</text>
</comment>
<dbReference type="EMBL" id="CH408044">
    <property type="protein sequence ID" value="EDV10256.1"/>
    <property type="molecule type" value="Genomic_DNA"/>
</dbReference>
<dbReference type="SMR" id="B3LIN5"/>
<dbReference type="HOGENOM" id="CLU_089418_2_1_1"/>
<dbReference type="OrthoDB" id="41571at4893"/>
<dbReference type="Proteomes" id="UP000008335">
    <property type="component" value="Unassembled WGS sequence"/>
</dbReference>
<dbReference type="GO" id="GO:0005789">
    <property type="term" value="C:endoplasmic reticulum membrane"/>
    <property type="evidence" value="ECO:0007669"/>
    <property type="project" value="UniProtKB-SubCell"/>
</dbReference>
<dbReference type="GO" id="GO:0043529">
    <property type="term" value="C:GET complex"/>
    <property type="evidence" value="ECO:0007669"/>
    <property type="project" value="UniProtKB-UniRule"/>
</dbReference>
<dbReference type="GO" id="GO:0000139">
    <property type="term" value="C:Golgi membrane"/>
    <property type="evidence" value="ECO:0007669"/>
    <property type="project" value="UniProtKB-SubCell"/>
</dbReference>
<dbReference type="GO" id="GO:0043495">
    <property type="term" value="F:protein-membrane adaptor activity"/>
    <property type="evidence" value="ECO:0007669"/>
    <property type="project" value="TreeGrafter"/>
</dbReference>
<dbReference type="GO" id="GO:0071816">
    <property type="term" value="P:tail-anchored membrane protein insertion into ER membrane"/>
    <property type="evidence" value="ECO:0007669"/>
    <property type="project" value="InterPro"/>
</dbReference>
<dbReference type="GO" id="GO:0016192">
    <property type="term" value="P:vesicle-mediated transport"/>
    <property type="evidence" value="ECO:0007669"/>
    <property type="project" value="UniProtKB-KW"/>
</dbReference>
<dbReference type="Gene3D" id="1.10.287.660">
    <property type="entry name" value="Helix hairpin bin"/>
    <property type="match status" value="1"/>
</dbReference>
<dbReference type="HAMAP" id="MF_03113">
    <property type="entry name" value="Get1"/>
    <property type="match status" value="1"/>
</dbReference>
<dbReference type="InterPro" id="IPR028945">
    <property type="entry name" value="Get1"/>
</dbReference>
<dbReference type="InterPro" id="IPR027538">
    <property type="entry name" value="Get1_fungi"/>
</dbReference>
<dbReference type="InterPro" id="IPR029012">
    <property type="entry name" value="Helix_hairpin_bin_sf"/>
</dbReference>
<dbReference type="PANTHER" id="PTHR42650:SF1">
    <property type="entry name" value="GUIDED ENTRY OF TAIL-ANCHORED PROTEINS FACTOR 1"/>
    <property type="match status" value="1"/>
</dbReference>
<dbReference type="PANTHER" id="PTHR42650">
    <property type="entry name" value="TAIL-ANCHORED PROTEIN INSERTION RECEPTOR WRB"/>
    <property type="match status" value="1"/>
</dbReference>
<dbReference type="Pfam" id="PF04420">
    <property type="entry name" value="CHD5"/>
    <property type="match status" value="1"/>
</dbReference>
<keyword id="KW-0175">Coiled coil</keyword>
<keyword id="KW-0256">Endoplasmic reticulum</keyword>
<keyword id="KW-0931">ER-Golgi transport</keyword>
<keyword id="KW-0333">Golgi apparatus</keyword>
<keyword id="KW-0472">Membrane</keyword>
<keyword id="KW-0812">Transmembrane</keyword>
<keyword id="KW-1133">Transmembrane helix</keyword>
<keyword id="KW-0813">Transport</keyword>
<proteinExistence type="inferred from homology"/>
<accession>B3LIN5</accession>
<gene>
    <name evidence="1" type="primary">GET1</name>
    <name type="ORF">SCRG_01028</name>
</gene>
<name>GET1_YEAS1</name>
<organism>
    <name type="scientific">Saccharomyces cerevisiae (strain RM11-1a)</name>
    <name type="common">Baker's yeast</name>
    <dbReference type="NCBI Taxonomy" id="285006"/>
    <lineage>
        <taxon>Eukaryota</taxon>
        <taxon>Fungi</taxon>
        <taxon>Dikarya</taxon>
        <taxon>Ascomycota</taxon>
        <taxon>Saccharomycotina</taxon>
        <taxon>Saccharomycetes</taxon>
        <taxon>Saccharomycetales</taxon>
        <taxon>Saccharomycetaceae</taxon>
        <taxon>Saccharomyces</taxon>
    </lineage>
</organism>